<feature type="chain" id="PRO_1000198589" description="tRNA (guanine-N(1)-)-methyltransferase">
    <location>
        <begin position="1"/>
        <end position="239"/>
    </location>
</feature>
<feature type="binding site" evidence="1">
    <location>
        <position position="108"/>
    </location>
    <ligand>
        <name>S-adenosyl-L-methionine</name>
        <dbReference type="ChEBI" id="CHEBI:59789"/>
    </ligand>
</feature>
<feature type="binding site" evidence="1">
    <location>
        <begin position="127"/>
        <end position="132"/>
    </location>
    <ligand>
        <name>S-adenosyl-L-methionine</name>
        <dbReference type="ChEBI" id="CHEBI:59789"/>
    </ligand>
</feature>
<gene>
    <name evidence="1" type="primary">trmD</name>
    <name type="ordered locus">SPP_0787</name>
</gene>
<sequence length="239" mass="27661">MKIDILTLFPEMFSPLEHSIVGKAREKGLLDIQYHNFRENAEKARHVDDEPYGGGQGMLLRAQPIFDSFDAIEKKNPRVILLDPAGKQFDQVYAEDLAQEEELIFICGHYEGYDERIKTLVTDEISLGDYVLTGGELAAMTMIDATVRLIPEVIGKESSHQDDSFSSGLLEYPQYTRPYDYRGMVVPDVLMSGHHEKIRQWRLYESLKKTYERRPDLLEHYQLTVEEEKMLAEIKENKE</sequence>
<proteinExistence type="inferred from homology"/>
<keyword id="KW-0963">Cytoplasm</keyword>
<keyword id="KW-0489">Methyltransferase</keyword>
<keyword id="KW-0949">S-adenosyl-L-methionine</keyword>
<keyword id="KW-0808">Transferase</keyword>
<keyword id="KW-0819">tRNA processing</keyword>
<protein>
    <recommendedName>
        <fullName evidence="1">tRNA (guanine-N(1)-)-methyltransferase</fullName>
        <ecNumber evidence="1">2.1.1.228</ecNumber>
    </recommendedName>
    <alternativeName>
        <fullName evidence="1">M1G-methyltransferase</fullName>
    </alternativeName>
    <alternativeName>
        <fullName evidence="1">tRNA [GM37] methyltransferase</fullName>
    </alternativeName>
</protein>
<name>TRMD_STRZP</name>
<reference key="1">
    <citation type="journal article" date="2010" name="Genome Biol.">
        <title>Structure and dynamics of the pan-genome of Streptococcus pneumoniae and closely related species.</title>
        <authorList>
            <person name="Donati C."/>
            <person name="Hiller N.L."/>
            <person name="Tettelin H."/>
            <person name="Muzzi A."/>
            <person name="Croucher N.J."/>
            <person name="Angiuoli S.V."/>
            <person name="Oggioni M."/>
            <person name="Dunning Hotopp J.C."/>
            <person name="Hu F.Z."/>
            <person name="Riley D.R."/>
            <person name="Covacci A."/>
            <person name="Mitchell T.J."/>
            <person name="Bentley S.D."/>
            <person name="Kilian M."/>
            <person name="Ehrlich G.D."/>
            <person name="Rappuoli R."/>
            <person name="Moxon E.R."/>
            <person name="Masignani V."/>
        </authorList>
    </citation>
    <scope>NUCLEOTIDE SEQUENCE [LARGE SCALE GENOMIC DNA]</scope>
    <source>
        <strain>P1031</strain>
    </source>
</reference>
<evidence type="ECO:0000255" key="1">
    <source>
        <dbReference type="HAMAP-Rule" id="MF_00605"/>
    </source>
</evidence>
<accession>C1CJM5</accession>
<comment type="function">
    <text evidence="1">Specifically methylates guanosine-37 in various tRNAs.</text>
</comment>
<comment type="catalytic activity">
    <reaction evidence="1">
        <text>guanosine(37) in tRNA + S-adenosyl-L-methionine = N(1)-methylguanosine(37) in tRNA + S-adenosyl-L-homocysteine + H(+)</text>
        <dbReference type="Rhea" id="RHEA:36899"/>
        <dbReference type="Rhea" id="RHEA-COMP:10145"/>
        <dbReference type="Rhea" id="RHEA-COMP:10147"/>
        <dbReference type="ChEBI" id="CHEBI:15378"/>
        <dbReference type="ChEBI" id="CHEBI:57856"/>
        <dbReference type="ChEBI" id="CHEBI:59789"/>
        <dbReference type="ChEBI" id="CHEBI:73542"/>
        <dbReference type="ChEBI" id="CHEBI:74269"/>
        <dbReference type="EC" id="2.1.1.228"/>
    </reaction>
</comment>
<comment type="subunit">
    <text evidence="1">Homodimer.</text>
</comment>
<comment type="subcellular location">
    <subcellularLocation>
        <location evidence="1">Cytoplasm</location>
    </subcellularLocation>
</comment>
<comment type="similarity">
    <text evidence="1">Belongs to the RNA methyltransferase TrmD family.</text>
</comment>
<dbReference type="EC" id="2.1.1.228" evidence="1"/>
<dbReference type="EMBL" id="CP000920">
    <property type="protein sequence ID" value="ACO20838.1"/>
    <property type="molecule type" value="Genomic_DNA"/>
</dbReference>
<dbReference type="RefSeq" id="WP_000686923.1">
    <property type="nucleotide sequence ID" value="NC_012467.1"/>
</dbReference>
<dbReference type="SMR" id="C1CJM5"/>
<dbReference type="GeneID" id="45653850"/>
<dbReference type="KEGG" id="spp:SPP_0787"/>
<dbReference type="HOGENOM" id="CLU_047363_0_1_9"/>
<dbReference type="GO" id="GO:0005829">
    <property type="term" value="C:cytosol"/>
    <property type="evidence" value="ECO:0007669"/>
    <property type="project" value="TreeGrafter"/>
</dbReference>
<dbReference type="GO" id="GO:0052906">
    <property type="term" value="F:tRNA (guanine(37)-N1)-methyltransferase activity"/>
    <property type="evidence" value="ECO:0007669"/>
    <property type="project" value="UniProtKB-UniRule"/>
</dbReference>
<dbReference type="GO" id="GO:0002939">
    <property type="term" value="P:tRNA N1-guanine methylation"/>
    <property type="evidence" value="ECO:0007669"/>
    <property type="project" value="TreeGrafter"/>
</dbReference>
<dbReference type="CDD" id="cd18080">
    <property type="entry name" value="TrmD-like"/>
    <property type="match status" value="1"/>
</dbReference>
<dbReference type="FunFam" id="1.10.1270.20:FF:000001">
    <property type="entry name" value="tRNA (guanine-N(1)-)-methyltransferase"/>
    <property type="match status" value="1"/>
</dbReference>
<dbReference type="FunFam" id="3.40.1280.10:FF:000001">
    <property type="entry name" value="tRNA (guanine-N(1)-)-methyltransferase"/>
    <property type="match status" value="1"/>
</dbReference>
<dbReference type="Gene3D" id="3.40.1280.10">
    <property type="match status" value="1"/>
</dbReference>
<dbReference type="Gene3D" id="1.10.1270.20">
    <property type="entry name" value="tRNA(m1g37)methyltransferase, domain 2"/>
    <property type="match status" value="1"/>
</dbReference>
<dbReference type="HAMAP" id="MF_00605">
    <property type="entry name" value="TrmD"/>
    <property type="match status" value="1"/>
</dbReference>
<dbReference type="InterPro" id="IPR029028">
    <property type="entry name" value="Alpha/beta_knot_MTases"/>
</dbReference>
<dbReference type="InterPro" id="IPR023148">
    <property type="entry name" value="tRNA_m1G_MeTrfase_C_sf"/>
</dbReference>
<dbReference type="InterPro" id="IPR002649">
    <property type="entry name" value="tRNA_m1G_MeTrfase_TrmD"/>
</dbReference>
<dbReference type="InterPro" id="IPR029026">
    <property type="entry name" value="tRNA_m1G_MTases_N"/>
</dbReference>
<dbReference type="InterPro" id="IPR016009">
    <property type="entry name" value="tRNA_MeTrfase_TRMD/TRM10"/>
</dbReference>
<dbReference type="NCBIfam" id="NF000648">
    <property type="entry name" value="PRK00026.1"/>
    <property type="match status" value="1"/>
</dbReference>
<dbReference type="NCBIfam" id="TIGR00088">
    <property type="entry name" value="trmD"/>
    <property type="match status" value="1"/>
</dbReference>
<dbReference type="PANTHER" id="PTHR46417">
    <property type="entry name" value="TRNA (GUANINE-N(1)-)-METHYLTRANSFERASE"/>
    <property type="match status" value="1"/>
</dbReference>
<dbReference type="PANTHER" id="PTHR46417:SF1">
    <property type="entry name" value="TRNA (GUANINE-N(1)-)-METHYLTRANSFERASE"/>
    <property type="match status" value="1"/>
</dbReference>
<dbReference type="Pfam" id="PF01746">
    <property type="entry name" value="tRNA_m1G_MT"/>
    <property type="match status" value="1"/>
</dbReference>
<dbReference type="PIRSF" id="PIRSF000386">
    <property type="entry name" value="tRNA_mtase"/>
    <property type="match status" value="1"/>
</dbReference>
<dbReference type="SUPFAM" id="SSF75217">
    <property type="entry name" value="alpha/beta knot"/>
    <property type="match status" value="1"/>
</dbReference>
<organism>
    <name type="scientific">Streptococcus pneumoniae (strain P1031)</name>
    <dbReference type="NCBI Taxonomy" id="488223"/>
    <lineage>
        <taxon>Bacteria</taxon>
        <taxon>Bacillati</taxon>
        <taxon>Bacillota</taxon>
        <taxon>Bacilli</taxon>
        <taxon>Lactobacillales</taxon>
        <taxon>Streptococcaceae</taxon>
        <taxon>Streptococcus</taxon>
    </lineage>
</organism>